<sequence length="529" mass="59990">MYQKEIEQRRTFGIISHPDAGKTTLTEKLLLFGGAIQLAGTVKARKATRHATSDWMAIEKERGISVTTSVMKFHYRDFEINLLDTPGHQDFSEDTYRVLTAVDSAVMVIDGAKGVEPQTEKLMEICLLRNTPVITFINKLDREVLSPLELLADIEKKLQIECVPMSWPIGMGKSFRGVYNLYRRELQLFTPGASTRGGEVFVIRDLDDPELDRRLGSQADELREDIALMEGAANPFVYEHFLKANQTPVFFGSAINNFGVRELLDAVVELAPSPRPRLATTREVLPSEEQFSGFAFKIQANMDSAHRDRIAFVRICSGKFTRGMKVRHNRIGKDVTLANATIFMAQDRASVEEAYPGDIIGIHNHGTIRIGDTFTEGEELRFTGIPNFAPEHFCRVRLKNPLKTKQLQKGLNQLSEEGIVQVFRPLTSNDYILGVVGVLQFDVTMVRLLNEYGVEADYESVDYAAARWVTCPEREKLENFEKQHRSNLALDSEGNLIYLALSQWRLSNTMEEWPDITMHKTMEHSQRLN</sequence>
<accession>Q2LWC5</accession>
<feature type="chain" id="PRO_0000242222" description="Peptide chain release factor 3">
    <location>
        <begin position="1"/>
        <end position="529"/>
    </location>
</feature>
<feature type="domain" description="tr-type G">
    <location>
        <begin position="7"/>
        <end position="275"/>
    </location>
</feature>
<feature type="binding site" evidence="1">
    <location>
        <begin position="16"/>
        <end position="23"/>
    </location>
    <ligand>
        <name>GTP</name>
        <dbReference type="ChEBI" id="CHEBI:37565"/>
    </ligand>
</feature>
<feature type="binding site" evidence="1">
    <location>
        <begin position="84"/>
        <end position="88"/>
    </location>
    <ligand>
        <name>GTP</name>
        <dbReference type="ChEBI" id="CHEBI:37565"/>
    </ligand>
</feature>
<feature type="binding site" evidence="1">
    <location>
        <begin position="138"/>
        <end position="141"/>
    </location>
    <ligand>
        <name>GTP</name>
        <dbReference type="ChEBI" id="CHEBI:37565"/>
    </ligand>
</feature>
<organism>
    <name type="scientific">Syntrophus aciditrophicus (strain SB)</name>
    <dbReference type="NCBI Taxonomy" id="56780"/>
    <lineage>
        <taxon>Bacteria</taxon>
        <taxon>Pseudomonadati</taxon>
        <taxon>Thermodesulfobacteriota</taxon>
        <taxon>Syntrophia</taxon>
        <taxon>Syntrophales</taxon>
        <taxon>Syntrophaceae</taxon>
        <taxon>Syntrophus</taxon>
    </lineage>
</organism>
<gene>
    <name evidence="1" type="primary">prfC</name>
    <name type="ordered locus">SYNAS_25100</name>
    <name type="ORF">SYN_00848</name>
</gene>
<evidence type="ECO:0000255" key="1">
    <source>
        <dbReference type="HAMAP-Rule" id="MF_00072"/>
    </source>
</evidence>
<proteinExistence type="inferred from homology"/>
<name>RF3_SYNAS</name>
<protein>
    <recommendedName>
        <fullName evidence="1">Peptide chain release factor 3</fullName>
        <shortName evidence="1">RF-3</shortName>
    </recommendedName>
</protein>
<keyword id="KW-0963">Cytoplasm</keyword>
<keyword id="KW-0342">GTP-binding</keyword>
<keyword id="KW-0547">Nucleotide-binding</keyword>
<keyword id="KW-0648">Protein biosynthesis</keyword>
<keyword id="KW-1185">Reference proteome</keyword>
<comment type="function">
    <text evidence="1">Increases the formation of ribosomal termination complexes and stimulates activities of RF-1 and RF-2. It binds guanine nucleotides and has strong preference for UGA stop codons. It may interact directly with the ribosome. The stimulation of RF-1 and RF-2 is significantly reduced by GTP and GDP, but not by GMP.</text>
</comment>
<comment type="subcellular location">
    <subcellularLocation>
        <location evidence="1">Cytoplasm</location>
    </subcellularLocation>
</comment>
<comment type="similarity">
    <text evidence="1">Belongs to the TRAFAC class translation factor GTPase superfamily. Classic translation factor GTPase family. PrfC subfamily.</text>
</comment>
<dbReference type="EMBL" id="CP000252">
    <property type="protein sequence ID" value="ABC78388.1"/>
    <property type="molecule type" value="Genomic_DNA"/>
</dbReference>
<dbReference type="RefSeq" id="WP_011418408.1">
    <property type="nucleotide sequence ID" value="NC_007759.1"/>
</dbReference>
<dbReference type="SMR" id="Q2LWC5"/>
<dbReference type="FunCoup" id="Q2LWC5">
    <property type="interactions" value="223"/>
</dbReference>
<dbReference type="STRING" id="56780.SYN_00848"/>
<dbReference type="KEGG" id="sat:SYN_00848"/>
<dbReference type="eggNOG" id="COG4108">
    <property type="taxonomic scope" value="Bacteria"/>
</dbReference>
<dbReference type="HOGENOM" id="CLU_002794_2_1_7"/>
<dbReference type="InParanoid" id="Q2LWC5"/>
<dbReference type="OrthoDB" id="9801591at2"/>
<dbReference type="Proteomes" id="UP000001933">
    <property type="component" value="Chromosome"/>
</dbReference>
<dbReference type="GO" id="GO:0005829">
    <property type="term" value="C:cytosol"/>
    <property type="evidence" value="ECO:0007669"/>
    <property type="project" value="TreeGrafter"/>
</dbReference>
<dbReference type="GO" id="GO:0005525">
    <property type="term" value="F:GTP binding"/>
    <property type="evidence" value="ECO:0007669"/>
    <property type="project" value="UniProtKB-UniRule"/>
</dbReference>
<dbReference type="GO" id="GO:0003924">
    <property type="term" value="F:GTPase activity"/>
    <property type="evidence" value="ECO:0007669"/>
    <property type="project" value="InterPro"/>
</dbReference>
<dbReference type="GO" id="GO:0016150">
    <property type="term" value="F:translation release factor activity, codon nonspecific"/>
    <property type="evidence" value="ECO:0007669"/>
    <property type="project" value="TreeGrafter"/>
</dbReference>
<dbReference type="GO" id="GO:0016149">
    <property type="term" value="F:translation release factor activity, codon specific"/>
    <property type="evidence" value="ECO:0007669"/>
    <property type="project" value="UniProtKB-UniRule"/>
</dbReference>
<dbReference type="GO" id="GO:0006449">
    <property type="term" value="P:regulation of translational termination"/>
    <property type="evidence" value="ECO:0007669"/>
    <property type="project" value="UniProtKB-UniRule"/>
</dbReference>
<dbReference type="CDD" id="cd04169">
    <property type="entry name" value="RF3"/>
    <property type="match status" value="1"/>
</dbReference>
<dbReference type="CDD" id="cd03689">
    <property type="entry name" value="RF3_II"/>
    <property type="match status" value="1"/>
</dbReference>
<dbReference type="CDD" id="cd16259">
    <property type="entry name" value="RF3_III"/>
    <property type="match status" value="1"/>
</dbReference>
<dbReference type="FunFam" id="2.40.30.10:FF:000040">
    <property type="entry name" value="Peptide chain release factor 3"/>
    <property type="match status" value="1"/>
</dbReference>
<dbReference type="FunFam" id="3.30.70.3280:FF:000001">
    <property type="entry name" value="Peptide chain release factor 3"/>
    <property type="match status" value="1"/>
</dbReference>
<dbReference type="FunFam" id="3.40.50.300:FF:000542">
    <property type="entry name" value="Peptide chain release factor 3"/>
    <property type="match status" value="1"/>
</dbReference>
<dbReference type="Gene3D" id="3.40.50.300">
    <property type="entry name" value="P-loop containing nucleotide triphosphate hydrolases"/>
    <property type="match status" value="2"/>
</dbReference>
<dbReference type="Gene3D" id="3.30.70.3280">
    <property type="entry name" value="Peptide chain release factor 3, domain III"/>
    <property type="match status" value="1"/>
</dbReference>
<dbReference type="HAMAP" id="MF_00072">
    <property type="entry name" value="Rel_fac_3"/>
    <property type="match status" value="1"/>
</dbReference>
<dbReference type="InterPro" id="IPR053905">
    <property type="entry name" value="EF-G-like_DII"/>
</dbReference>
<dbReference type="InterPro" id="IPR035647">
    <property type="entry name" value="EFG_III/V"/>
</dbReference>
<dbReference type="InterPro" id="IPR031157">
    <property type="entry name" value="G_TR_CS"/>
</dbReference>
<dbReference type="InterPro" id="IPR027417">
    <property type="entry name" value="P-loop_NTPase"/>
</dbReference>
<dbReference type="InterPro" id="IPR004548">
    <property type="entry name" value="PrfC"/>
</dbReference>
<dbReference type="InterPro" id="IPR032090">
    <property type="entry name" value="RF3_C"/>
</dbReference>
<dbReference type="InterPro" id="IPR038467">
    <property type="entry name" value="RF3_dom_3_sf"/>
</dbReference>
<dbReference type="InterPro" id="IPR041732">
    <property type="entry name" value="RF3_GTP-bd"/>
</dbReference>
<dbReference type="InterPro" id="IPR005225">
    <property type="entry name" value="Small_GTP-bd"/>
</dbReference>
<dbReference type="InterPro" id="IPR000795">
    <property type="entry name" value="T_Tr_GTP-bd_dom"/>
</dbReference>
<dbReference type="InterPro" id="IPR009000">
    <property type="entry name" value="Transl_B-barrel_sf"/>
</dbReference>
<dbReference type="NCBIfam" id="TIGR00503">
    <property type="entry name" value="prfC"/>
    <property type="match status" value="1"/>
</dbReference>
<dbReference type="NCBIfam" id="NF001964">
    <property type="entry name" value="PRK00741.1"/>
    <property type="match status" value="1"/>
</dbReference>
<dbReference type="NCBIfam" id="TIGR00231">
    <property type="entry name" value="small_GTP"/>
    <property type="match status" value="1"/>
</dbReference>
<dbReference type="PANTHER" id="PTHR43556">
    <property type="entry name" value="PEPTIDE CHAIN RELEASE FACTOR RF3"/>
    <property type="match status" value="1"/>
</dbReference>
<dbReference type="PANTHER" id="PTHR43556:SF2">
    <property type="entry name" value="PEPTIDE CHAIN RELEASE FACTOR RF3"/>
    <property type="match status" value="1"/>
</dbReference>
<dbReference type="Pfam" id="PF22042">
    <property type="entry name" value="EF-G_D2"/>
    <property type="match status" value="1"/>
</dbReference>
<dbReference type="Pfam" id="PF00009">
    <property type="entry name" value="GTP_EFTU"/>
    <property type="match status" value="1"/>
</dbReference>
<dbReference type="Pfam" id="PF16658">
    <property type="entry name" value="RF3_C"/>
    <property type="match status" value="1"/>
</dbReference>
<dbReference type="PRINTS" id="PR00315">
    <property type="entry name" value="ELONGATNFCT"/>
</dbReference>
<dbReference type="SUPFAM" id="SSF54980">
    <property type="entry name" value="EF-G C-terminal domain-like"/>
    <property type="match status" value="1"/>
</dbReference>
<dbReference type="SUPFAM" id="SSF52540">
    <property type="entry name" value="P-loop containing nucleoside triphosphate hydrolases"/>
    <property type="match status" value="1"/>
</dbReference>
<dbReference type="SUPFAM" id="SSF50447">
    <property type="entry name" value="Translation proteins"/>
    <property type="match status" value="1"/>
</dbReference>
<dbReference type="PROSITE" id="PS00301">
    <property type="entry name" value="G_TR_1"/>
    <property type="match status" value="1"/>
</dbReference>
<dbReference type="PROSITE" id="PS51722">
    <property type="entry name" value="G_TR_2"/>
    <property type="match status" value="1"/>
</dbReference>
<reference key="1">
    <citation type="journal article" date="2007" name="Proc. Natl. Acad. Sci. U.S.A.">
        <title>The genome of Syntrophus aciditrophicus: life at the thermodynamic limit of microbial growth.</title>
        <authorList>
            <person name="McInerney M.J."/>
            <person name="Rohlin L."/>
            <person name="Mouttaki H."/>
            <person name="Kim U."/>
            <person name="Krupp R.S."/>
            <person name="Rios-Hernandez L."/>
            <person name="Sieber J."/>
            <person name="Struchtemeyer C.G."/>
            <person name="Bhattacharyya A."/>
            <person name="Campbell J.W."/>
            <person name="Gunsalus R.P."/>
        </authorList>
    </citation>
    <scope>NUCLEOTIDE SEQUENCE [LARGE SCALE GENOMIC DNA]</scope>
    <source>
        <strain>SB</strain>
    </source>
</reference>